<reference key="1">
    <citation type="journal article" date="2004" name="Nature">
        <title>Genome sequence of the Brown Norway rat yields insights into mammalian evolution.</title>
        <authorList>
            <person name="Gibbs R.A."/>
            <person name="Weinstock G.M."/>
            <person name="Metzker M.L."/>
            <person name="Muzny D.M."/>
            <person name="Sodergren E.J."/>
            <person name="Scherer S."/>
            <person name="Scott G."/>
            <person name="Steffen D."/>
            <person name="Worley K.C."/>
            <person name="Burch P.E."/>
            <person name="Okwuonu G."/>
            <person name="Hines S."/>
            <person name="Lewis L."/>
            <person name="Deramo C."/>
            <person name="Delgado O."/>
            <person name="Dugan-Rocha S."/>
            <person name="Miner G."/>
            <person name="Morgan M."/>
            <person name="Hawes A."/>
            <person name="Gill R."/>
            <person name="Holt R.A."/>
            <person name="Adams M.D."/>
            <person name="Amanatides P.G."/>
            <person name="Baden-Tillson H."/>
            <person name="Barnstead M."/>
            <person name="Chin S."/>
            <person name="Evans C.A."/>
            <person name="Ferriera S."/>
            <person name="Fosler C."/>
            <person name="Glodek A."/>
            <person name="Gu Z."/>
            <person name="Jennings D."/>
            <person name="Kraft C.L."/>
            <person name="Nguyen T."/>
            <person name="Pfannkoch C.M."/>
            <person name="Sitter C."/>
            <person name="Sutton G.G."/>
            <person name="Venter J.C."/>
            <person name="Woodage T."/>
            <person name="Smith D."/>
            <person name="Lee H.-M."/>
            <person name="Gustafson E."/>
            <person name="Cahill P."/>
            <person name="Kana A."/>
            <person name="Doucette-Stamm L."/>
            <person name="Weinstock K."/>
            <person name="Fechtel K."/>
            <person name="Weiss R.B."/>
            <person name="Dunn D.M."/>
            <person name="Green E.D."/>
            <person name="Blakesley R.W."/>
            <person name="Bouffard G.G."/>
            <person name="De Jong P.J."/>
            <person name="Osoegawa K."/>
            <person name="Zhu B."/>
            <person name="Marra M."/>
            <person name="Schein J."/>
            <person name="Bosdet I."/>
            <person name="Fjell C."/>
            <person name="Jones S."/>
            <person name="Krzywinski M."/>
            <person name="Mathewson C."/>
            <person name="Siddiqui A."/>
            <person name="Wye N."/>
            <person name="McPherson J."/>
            <person name="Zhao S."/>
            <person name="Fraser C.M."/>
            <person name="Shetty J."/>
            <person name="Shatsman S."/>
            <person name="Geer K."/>
            <person name="Chen Y."/>
            <person name="Abramzon S."/>
            <person name="Nierman W.C."/>
            <person name="Havlak P.H."/>
            <person name="Chen R."/>
            <person name="Durbin K.J."/>
            <person name="Egan A."/>
            <person name="Ren Y."/>
            <person name="Song X.-Z."/>
            <person name="Li B."/>
            <person name="Liu Y."/>
            <person name="Qin X."/>
            <person name="Cawley S."/>
            <person name="Cooney A.J."/>
            <person name="D'Souza L.M."/>
            <person name="Martin K."/>
            <person name="Wu J.Q."/>
            <person name="Gonzalez-Garay M.L."/>
            <person name="Jackson A.R."/>
            <person name="Kalafus K.J."/>
            <person name="McLeod M.P."/>
            <person name="Milosavljevic A."/>
            <person name="Virk D."/>
            <person name="Volkov A."/>
            <person name="Wheeler D.A."/>
            <person name="Zhang Z."/>
            <person name="Bailey J.A."/>
            <person name="Eichler E.E."/>
            <person name="Tuzun E."/>
            <person name="Birney E."/>
            <person name="Mongin E."/>
            <person name="Ureta-Vidal A."/>
            <person name="Woodwark C."/>
            <person name="Zdobnov E."/>
            <person name="Bork P."/>
            <person name="Suyama M."/>
            <person name="Torrents D."/>
            <person name="Alexandersson M."/>
            <person name="Trask B.J."/>
            <person name="Young J.M."/>
            <person name="Huang H."/>
            <person name="Wang H."/>
            <person name="Xing H."/>
            <person name="Daniels S."/>
            <person name="Gietzen D."/>
            <person name="Schmidt J."/>
            <person name="Stevens K."/>
            <person name="Vitt U."/>
            <person name="Wingrove J."/>
            <person name="Camara F."/>
            <person name="Mar Alba M."/>
            <person name="Abril J.F."/>
            <person name="Guigo R."/>
            <person name="Smit A."/>
            <person name="Dubchak I."/>
            <person name="Rubin E.M."/>
            <person name="Couronne O."/>
            <person name="Poliakov A."/>
            <person name="Huebner N."/>
            <person name="Ganten D."/>
            <person name="Goesele C."/>
            <person name="Hummel O."/>
            <person name="Kreitler T."/>
            <person name="Lee Y.-A."/>
            <person name="Monti J."/>
            <person name="Schulz H."/>
            <person name="Zimdahl H."/>
            <person name="Himmelbauer H."/>
            <person name="Lehrach H."/>
            <person name="Jacob H.J."/>
            <person name="Bromberg S."/>
            <person name="Gullings-Handley J."/>
            <person name="Jensen-Seaman M.I."/>
            <person name="Kwitek A.E."/>
            <person name="Lazar J."/>
            <person name="Pasko D."/>
            <person name="Tonellato P.J."/>
            <person name="Twigger S."/>
            <person name="Ponting C.P."/>
            <person name="Duarte J.M."/>
            <person name="Rice S."/>
            <person name="Goodstadt L."/>
            <person name="Beatson S.A."/>
            <person name="Emes R.D."/>
            <person name="Winter E.E."/>
            <person name="Webber C."/>
            <person name="Brandt P."/>
            <person name="Nyakatura G."/>
            <person name="Adetobi M."/>
            <person name="Chiaromonte F."/>
            <person name="Elnitski L."/>
            <person name="Eswara P."/>
            <person name="Hardison R.C."/>
            <person name="Hou M."/>
            <person name="Kolbe D."/>
            <person name="Makova K."/>
            <person name="Miller W."/>
            <person name="Nekrutenko A."/>
            <person name="Riemer C."/>
            <person name="Schwartz S."/>
            <person name="Taylor J."/>
            <person name="Yang S."/>
            <person name="Zhang Y."/>
            <person name="Lindpaintner K."/>
            <person name="Andrews T.D."/>
            <person name="Caccamo M."/>
            <person name="Clamp M."/>
            <person name="Clarke L."/>
            <person name="Curwen V."/>
            <person name="Durbin R.M."/>
            <person name="Eyras E."/>
            <person name="Searle S.M."/>
            <person name="Cooper G.M."/>
            <person name="Batzoglou S."/>
            <person name="Brudno M."/>
            <person name="Sidow A."/>
            <person name="Stone E.A."/>
            <person name="Payseur B.A."/>
            <person name="Bourque G."/>
            <person name="Lopez-Otin C."/>
            <person name="Puente X.S."/>
            <person name="Chakrabarti K."/>
            <person name="Chatterji S."/>
            <person name="Dewey C."/>
            <person name="Pachter L."/>
            <person name="Bray N."/>
            <person name="Yap V.B."/>
            <person name="Caspi A."/>
            <person name="Tesler G."/>
            <person name="Pevzner P.A."/>
            <person name="Haussler D."/>
            <person name="Roskin K.M."/>
            <person name="Baertsch R."/>
            <person name="Clawson H."/>
            <person name="Furey T.S."/>
            <person name="Hinrichs A.S."/>
            <person name="Karolchik D."/>
            <person name="Kent W.J."/>
            <person name="Rosenbloom K.R."/>
            <person name="Trumbower H."/>
            <person name="Weirauch M."/>
            <person name="Cooper D.N."/>
            <person name="Stenson P.D."/>
            <person name="Ma B."/>
            <person name="Brent M."/>
            <person name="Arumugam M."/>
            <person name="Shteynberg D."/>
            <person name="Copley R.R."/>
            <person name="Taylor M.S."/>
            <person name="Riethman H."/>
            <person name="Mudunuri U."/>
            <person name="Peterson J."/>
            <person name="Guyer M."/>
            <person name="Felsenfeld A."/>
            <person name="Old S."/>
            <person name="Mockrin S."/>
            <person name="Collins F.S."/>
        </authorList>
    </citation>
    <scope>NUCLEOTIDE SEQUENCE [LARGE SCALE GENOMIC DNA]</scope>
    <source>
        <strain>Brown Norway</strain>
    </source>
</reference>
<reference key="2">
    <citation type="journal article" date="1995" name="Biochem. Biophys. Res. Commun.">
        <title>Molecular cloning and characterization of a new member of the RAC protein kinase family: association of the pleckstrin homology domain of three types of RAC protein kinase with protein kinase C subspecies and beta gamma subunits of G proteins.</title>
        <authorList>
            <person name="Konishi H."/>
            <person name="Kuroda S."/>
            <person name="Tanaka M."/>
            <person name="Matsuzaki H."/>
            <person name="Ono Y."/>
            <person name="Kameyama K."/>
            <person name="Haga T."/>
            <person name="Kikkawa U."/>
        </authorList>
    </citation>
    <scope>NUCLEOTIDE SEQUENCE [MRNA] OF 1-454</scope>
    <source>
        <tissue>Brain</tissue>
    </source>
</reference>
<dbReference type="EC" id="2.7.11.1"/>
<dbReference type="EMBL" id="AABR03086280">
    <property type="status" value="NOT_ANNOTATED_CDS"/>
    <property type="molecule type" value="Genomic_DNA"/>
</dbReference>
<dbReference type="EMBL" id="D49836">
    <property type="protein sequence ID" value="BAA08637.1"/>
    <property type="molecule type" value="mRNA"/>
</dbReference>
<dbReference type="PIR" id="JC4345">
    <property type="entry name" value="JC4345"/>
</dbReference>
<dbReference type="RefSeq" id="NP_113763.1">
    <property type="nucleotide sequence ID" value="NM_031575.1"/>
</dbReference>
<dbReference type="SMR" id="Q63484"/>
<dbReference type="BioGRID" id="248064">
    <property type="interactions" value="59"/>
</dbReference>
<dbReference type="FunCoup" id="Q63484">
    <property type="interactions" value="3092"/>
</dbReference>
<dbReference type="STRING" id="10116.ENSRNOP00000070231"/>
<dbReference type="GlyCosmos" id="Q63484">
    <property type="glycosylation" value="2 sites, No reported glycans"/>
</dbReference>
<dbReference type="GlyGen" id="Q63484">
    <property type="glycosylation" value="2 sites"/>
</dbReference>
<dbReference type="iPTMnet" id="Q63484"/>
<dbReference type="PhosphoSitePlus" id="Q63484"/>
<dbReference type="jPOST" id="Q63484"/>
<dbReference type="PaxDb" id="10116-ENSRNOP00000054688"/>
<dbReference type="GeneID" id="29414"/>
<dbReference type="KEGG" id="rno:29414"/>
<dbReference type="UCSC" id="RGD:62390">
    <property type="organism name" value="rat"/>
</dbReference>
<dbReference type="AGR" id="RGD:62390"/>
<dbReference type="CTD" id="10000"/>
<dbReference type="RGD" id="62390">
    <property type="gene designation" value="Akt3"/>
</dbReference>
<dbReference type="eggNOG" id="KOG0690">
    <property type="taxonomic scope" value="Eukaryota"/>
</dbReference>
<dbReference type="InParanoid" id="Q63484"/>
<dbReference type="PhylomeDB" id="Q63484"/>
<dbReference type="BRENDA" id="2.7.11.1">
    <property type="organism ID" value="5301"/>
</dbReference>
<dbReference type="Reactome" id="R-RNO-1257604">
    <property type="pathway name" value="PIP3 activates AKT signaling"/>
</dbReference>
<dbReference type="Reactome" id="R-RNO-1358803">
    <property type="pathway name" value="Downregulation of ERBB2:ERBB3 signaling"/>
</dbReference>
<dbReference type="Reactome" id="R-RNO-198323">
    <property type="pathway name" value="AKT phosphorylates targets in the cytosol"/>
</dbReference>
<dbReference type="Reactome" id="R-RNO-198693">
    <property type="pathway name" value="AKT phosphorylates targets in the nucleus"/>
</dbReference>
<dbReference type="Reactome" id="R-RNO-199418">
    <property type="pathway name" value="Negative regulation of the PI3K/AKT network"/>
</dbReference>
<dbReference type="Reactome" id="R-RNO-211163">
    <property type="pathway name" value="AKT-mediated inactivation of FOXO1A"/>
</dbReference>
<dbReference type="Reactome" id="R-RNO-389357">
    <property type="pathway name" value="CD28 dependent PI3K/Akt signaling"/>
</dbReference>
<dbReference type="Reactome" id="R-RNO-389513">
    <property type="pathway name" value="Co-inhibition by CTLA4"/>
</dbReference>
<dbReference type="Reactome" id="R-RNO-392451">
    <property type="pathway name" value="G beta:gamma signalling through PI3Kgamma"/>
</dbReference>
<dbReference type="Reactome" id="R-RNO-5218920">
    <property type="pathway name" value="VEGFR2 mediated vascular permeability"/>
</dbReference>
<dbReference type="Reactome" id="R-RNO-5628897">
    <property type="pathway name" value="TP53 Regulates Metabolic Genes"/>
</dbReference>
<dbReference type="Reactome" id="R-RNO-6804757">
    <property type="pathway name" value="Regulation of TP53 Degradation"/>
</dbReference>
<dbReference type="Reactome" id="R-RNO-6804758">
    <property type="pathway name" value="Regulation of TP53 Activity through Acetylation"/>
</dbReference>
<dbReference type="Reactome" id="R-RNO-6804759">
    <property type="pathway name" value="Regulation of TP53 Activity through Association with Co-factors"/>
</dbReference>
<dbReference type="Reactome" id="R-RNO-69202">
    <property type="pathway name" value="Cyclin E associated events during G1/S transition"/>
</dbReference>
<dbReference type="Reactome" id="R-RNO-69656">
    <property type="pathway name" value="Cyclin A:Cdk2-associated events at S phase entry"/>
</dbReference>
<dbReference type="Reactome" id="R-RNO-8876198">
    <property type="pathway name" value="RAB GEFs exchange GTP for GDP on RABs"/>
</dbReference>
<dbReference type="Reactome" id="R-RNO-8948751">
    <property type="pathway name" value="Regulation of PTEN stability and activity"/>
</dbReference>
<dbReference type="Reactome" id="R-RNO-9607240">
    <property type="pathway name" value="FLT3 Signaling"/>
</dbReference>
<dbReference type="Reactome" id="R-RNO-9614399">
    <property type="pathway name" value="Regulation of localization of FOXO transcription factors"/>
</dbReference>
<dbReference type="Reactome" id="R-RNO-9634638">
    <property type="pathway name" value="Estrogen-dependent nuclear events downstream of ESR-membrane signaling"/>
</dbReference>
<dbReference type="Reactome" id="R-RNO-9755511">
    <property type="pathway name" value="KEAP1-NFE2L2 pathway"/>
</dbReference>
<dbReference type="Reactome" id="R-RNO-9856649">
    <property type="pathway name" value="Transcriptional and post-translational regulation of MITF-M expression and activity"/>
</dbReference>
<dbReference type="PRO" id="PR:Q63484"/>
<dbReference type="Proteomes" id="UP000002494">
    <property type="component" value="Unplaced"/>
</dbReference>
<dbReference type="GO" id="GO:0005829">
    <property type="term" value="C:cytosol"/>
    <property type="evidence" value="ECO:0000304"/>
    <property type="project" value="Reactome"/>
</dbReference>
<dbReference type="GO" id="GO:0016020">
    <property type="term" value="C:membrane"/>
    <property type="evidence" value="ECO:0007669"/>
    <property type="project" value="UniProtKB-SubCell"/>
</dbReference>
<dbReference type="GO" id="GO:0005654">
    <property type="term" value="C:nucleoplasm"/>
    <property type="evidence" value="ECO:0000304"/>
    <property type="project" value="Reactome"/>
</dbReference>
<dbReference type="GO" id="GO:0005524">
    <property type="term" value="F:ATP binding"/>
    <property type="evidence" value="ECO:0000314"/>
    <property type="project" value="RGD"/>
</dbReference>
<dbReference type="GO" id="GO:0005080">
    <property type="term" value="F:protein kinase C binding"/>
    <property type="evidence" value="ECO:0000353"/>
    <property type="project" value="RGD"/>
</dbReference>
<dbReference type="GO" id="GO:0106310">
    <property type="term" value="F:protein serine kinase activity"/>
    <property type="evidence" value="ECO:0007669"/>
    <property type="project" value="RHEA"/>
</dbReference>
<dbReference type="GO" id="GO:0004674">
    <property type="term" value="F:protein serine/threonine kinase activity"/>
    <property type="evidence" value="ECO:0000314"/>
    <property type="project" value="RGD"/>
</dbReference>
<dbReference type="GO" id="GO:0048854">
    <property type="term" value="P:brain morphogenesis"/>
    <property type="evidence" value="ECO:0000266"/>
    <property type="project" value="RGD"/>
</dbReference>
<dbReference type="GO" id="GO:0032869">
    <property type="term" value="P:cellular response to insulin stimulus"/>
    <property type="evidence" value="ECO:0000315"/>
    <property type="project" value="MGI"/>
</dbReference>
<dbReference type="GO" id="GO:0048873">
    <property type="term" value="P:homeostasis of number of cells within a tissue"/>
    <property type="evidence" value="ECO:0000266"/>
    <property type="project" value="RGD"/>
</dbReference>
<dbReference type="GO" id="GO:0035556">
    <property type="term" value="P:intracellular signal transduction"/>
    <property type="evidence" value="ECO:0000318"/>
    <property type="project" value="GO_Central"/>
</dbReference>
<dbReference type="GO" id="GO:0000002">
    <property type="term" value="P:mitochondrial genome maintenance"/>
    <property type="evidence" value="ECO:0000266"/>
    <property type="project" value="RGD"/>
</dbReference>
<dbReference type="GO" id="GO:2000773">
    <property type="term" value="P:negative regulation of cellular senescence"/>
    <property type="evidence" value="ECO:0000266"/>
    <property type="project" value="RGD"/>
</dbReference>
<dbReference type="GO" id="GO:1903898">
    <property type="term" value="P:negative regulation of PERK-mediated unfolded protein response"/>
    <property type="evidence" value="ECO:0000266"/>
    <property type="project" value="RGD"/>
</dbReference>
<dbReference type="GO" id="GO:0045766">
    <property type="term" value="P:positive regulation of angiogenesis"/>
    <property type="evidence" value="ECO:0000266"/>
    <property type="project" value="RGD"/>
</dbReference>
<dbReference type="GO" id="GO:1905653">
    <property type="term" value="P:positive regulation of artery morphogenesis"/>
    <property type="evidence" value="ECO:0000266"/>
    <property type="project" value="RGD"/>
</dbReference>
<dbReference type="GO" id="GO:0043536">
    <property type="term" value="P:positive regulation of blood vessel endothelial cell migration"/>
    <property type="evidence" value="ECO:0000266"/>
    <property type="project" value="RGD"/>
</dbReference>
<dbReference type="GO" id="GO:0090050">
    <property type="term" value="P:positive regulation of cell migration involved in sprouting angiogenesis"/>
    <property type="evidence" value="ECO:0000266"/>
    <property type="project" value="RGD"/>
</dbReference>
<dbReference type="GO" id="GO:0045793">
    <property type="term" value="P:positive regulation of cell size"/>
    <property type="evidence" value="ECO:0000266"/>
    <property type="project" value="RGD"/>
</dbReference>
<dbReference type="GO" id="GO:0001938">
    <property type="term" value="P:positive regulation of endothelial cell proliferation"/>
    <property type="evidence" value="ECO:0000266"/>
    <property type="project" value="RGD"/>
</dbReference>
<dbReference type="GO" id="GO:0010765">
    <property type="term" value="P:positive regulation of sodium ion transport"/>
    <property type="evidence" value="ECO:0000315"/>
    <property type="project" value="MGI"/>
</dbReference>
<dbReference type="GO" id="GO:0032008">
    <property type="term" value="P:positive regulation of TOR signaling"/>
    <property type="evidence" value="ECO:0000266"/>
    <property type="project" value="RGD"/>
</dbReference>
<dbReference type="GO" id="GO:1905564">
    <property type="term" value="P:positive regulation of vascular endothelial cell proliferation"/>
    <property type="evidence" value="ECO:0000266"/>
    <property type="project" value="RGD"/>
</dbReference>
<dbReference type="GO" id="GO:0007165">
    <property type="term" value="P:signal transduction"/>
    <property type="evidence" value="ECO:0000266"/>
    <property type="project" value="RGD"/>
</dbReference>
<dbReference type="CDD" id="cd01241">
    <property type="entry name" value="PH_PKB"/>
    <property type="match status" value="1"/>
</dbReference>
<dbReference type="CDD" id="cd05593">
    <property type="entry name" value="STKc_PKB_gamma"/>
    <property type="match status" value="1"/>
</dbReference>
<dbReference type="FunFam" id="1.10.510.10:FF:000033">
    <property type="entry name" value="Non-specific serine/threonine protein kinase"/>
    <property type="match status" value="1"/>
</dbReference>
<dbReference type="FunFam" id="2.30.29.30:FF:000027">
    <property type="entry name" value="Non-specific serine/threonine protein kinase"/>
    <property type="match status" value="1"/>
</dbReference>
<dbReference type="FunFam" id="3.30.200.20:FF:000838">
    <property type="entry name" value="Non-specific serine/threonine protein kinase"/>
    <property type="match status" value="1"/>
</dbReference>
<dbReference type="Gene3D" id="3.30.200.20">
    <property type="entry name" value="Phosphorylase Kinase, domain 1"/>
    <property type="match status" value="1"/>
</dbReference>
<dbReference type="Gene3D" id="2.30.29.30">
    <property type="entry name" value="Pleckstrin-homology domain (PH domain)/Phosphotyrosine-binding domain (PTB)"/>
    <property type="match status" value="1"/>
</dbReference>
<dbReference type="Gene3D" id="1.10.510.10">
    <property type="entry name" value="Transferase(Phosphotransferase) domain 1"/>
    <property type="match status" value="1"/>
</dbReference>
<dbReference type="InterPro" id="IPR000961">
    <property type="entry name" value="AGC-kinase_C"/>
</dbReference>
<dbReference type="InterPro" id="IPR034675">
    <property type="entry name" value="Akt3"/>
</dbReference>
<dbReference type="InterPro" id="IPR011009">
    <property type="entry name" value="Kinase-like_dom_sf"/>
</dbReference>
<dbReference type="InterPro" id="IPR011993">
    <property type="entry name" value="PH-like_dom_sf"/>
</dbReference>
<dbReference type="InterPro" id="IPR001849">
    <property type="entry name" value="PH_domain"/>
</dbReference>
<dbReference type="InterPro" id="IPR039026">
    <property type="entry name" value="PH_PKB"/>
</dbReference>
<dbReference type="InterPro" id="IPR017892">
    <property type="entry name" value="Pkinase_C"/>
</dbReference>
<dbReference type="InterPro" id="IPR000719">
    <property type="entry name" value="Prot_kinase_dom"/>
</dbReference>
<dbReference type="InterPro" id="IPR017441">
    <property type="entry name" value="Protein_kinase_ATP_BS"/>
</dbReference>
<dbReference type="InterPro" id="IPR008271">
    <property type="entry name" value="Ser/Thr_kinase_AS"/>
</dbReference>
<dbReference type="PANTHER" id="PTHR24351">
    <property type="entry name" value="RIBOSOMAL PROTEIN S6 KINASE"/>
    <property type="match status" value="1"/>
</dbReference>
<dbReference type="Pfam" id="PF00169">
    <property type="entry name" value="PH"/>
    <property type="match status" value="1"/>
</dbReference>
<dbReference type="Pfam" id="PF00069">
    <property type="entry name" value="Pkinase"/>
    <property type="match status" value="1"/>
</dbReference>
<dbReference type="Pfam" id="PF00433">
    <property type="entry name" value="Pkinase_C"/>
    <property type="match status" value="1"/>
</dbReference>
<dbReference type="SMART" id="SM00233">
    <property type="entry name" value="PH"/>
    <property type="match status" value="1"/>
</dbReference>
<dbReference type="SMART" id="SM00133">
    <property type="entry name" value="S_TK_X"/>
    <property type="match status" value="1"/>
</dbReference>
<dbReference type="SMART" id="SM00220">
    <property type="entry name" value="S_TKc"/>
    <property type="match status" value="1"/>
</dbReference>
<dbReference type="SUPFAM" id="SSF50729">
    <property type="entry name" value="PH domain-like"/>
    <property type="match status" value="1"/>
</dbReference>
<dbReference type="SUPFAM" id="SSF56112">
    <property type="entry name" value="Protein kinase-like (PK-like)"/>
    <property type="match status" value="1"/>
</dbReference>
<dbReference type="PROSITE" id="PS51285">
    <property type="entry name" value="AGC_KINASE_CTER"/>
    <property type="match status" value="1"/>
</dbReference>
<dbReference type="PROSITE" id="PS50003">
    <property type="entry name" value="PH_DOMAIN"/>
    <property type="match status" value="1"/>
</dbReference>
<dbReference type="PROSITE" id="PS00107">
    <property type="entry name" value="PROTEIN_KINASE_ATP"/>
    <property type="match status" value="1"/>
</dbReference>
<dbReference type="PROSITE" id="PS50011">
    <property type="entry name" value="PROTEIN_KINASE_DOM"/>
    <property type="match status" value="1"/>
</dbReference>
<dbReference type="PROSITE" id="PS00108">
    <property type="entry name" value="PROTEIN_KINASE_ST"/>
    <property type="match status" value="1"/>
</dbReference>
<feature type="initiator methionine" description="Removed" evidence="7">
    <location>
        <position position="1"/>
    </location>
</feature>
<feature type="chain" id="PRO_0000085613" description="RAC-gamma serine/threonine-protein kinase">
    <location>
        <begin position="2"/>
        <end position="479"/>
    </location>
</feature>
<feature type="domain" description="PH" evidence="8">
    <location>
        <begin position="5"/>
        <end position="107"/>
    </location>
</feature>
<feature type="domain" description="Protein kinase" evidence="9">
    <location>
        <begin position="148"/>
        <end position="405"/>
    </location>
</feature>
<feature type="domain" description="AGC-kinase C-terminal" evidence="10">
    <location>
        <begin position="406"/>
        <end position="479"/>
    </location>
</feature>
<feature type="region of interest" description="Disordered" evidence="12">
    <location>
        <begin position="446"/>
        <end position="479"/>
    </location>
</feature>
<feature type="compositionally biased region" description="Acidic residues" evidence="12">
    <location>
        <begin position="451"/>
        <end position="460"/>
    </location>
</feature>
<feature type="active site" description="Proton acceptor" evidence="9 11">
    <location>
        <position position="271"/>
    </location>
</feature>
<feature type="binding site" evidence="9">
    <location>
        <begin position="154"/>
        <end position="162"/>
    </location>
    <ligand>
        <name>ATP</name>
        <dbReference type="ChEBI" id="CHEBI:30616"/>
    </ligand>
</feature>
<feature type="binding site" evidence="9">
    <location>
        <position position="177"/>
    </location>
    <ligand>
        <name>ATP</name>
        <dbReference type="ChEBI" id="CHEBI:30616"/>
    </ligand>
</feature>
<feature type="modified residue" description="N-acetylserine" evidence="7">
    <location>
        <position position="2"/>
    </location>
</feature>
<feature type="modified residue" description="Phosphothreonine; by PDPK1" evidence="7">
    <location>
        <position position="305"/>
    </location>
</feature>
<feature type="modified residue" description="Phosphothreonine" evidence="7">
    <location>
        <position position="447"/>
    </location>
</feature>
<feature type="modified residue" description="Phosphoserine; by PKC/PRKCZ" evidence="7">
    <location>
        <position position="472"/>
    </location>
</feature>
<feature type="glycosylation site" description="O-linked (GlcNAc) threonine" evidence="2">
    <location>
        <position position="302"/>
    </location>
</feature>
<feature type="glycosylation site" description="O-linked (GlcNAc) threonine" evidence="2">
    <location>
        <position position="309"/>
    </location>
</feature>
<feature type="glycosylation site" description="O-linked (GlcNAc) serine; alternate" evidence="3">
    <location>
        <position position="472"/>
    </location>
</feature>
<feature type="disulfide bond" evidence="2">
    <location>
        <begin position="59"/>
        <end position="76"/>
    </location>
</feature>
<feature type="disulfide bond" evidence="4">
    <location>
        <begin position="293"/>
        <end position="307"/>
    </location>
</feature>
<feature type="sequence conflict" description="In Ref. 2; BAA08637." evidence="13" ref="2">
    <original>DDD</original>
    <variation>CPL</variation>
    <location>
        <begin position="452"/>
        <end position="454"/>
    </location>
</feature>
<gene>
    <name type="primary">Akt3</name>
</gene>
<sequence length="479" mass="55796">MSDVTIVKEDWVQKRGEYIKNWRPRYFLLKTDGSFIGYKEKPQDVDLPYPLNNFSVAKCQLMKTERPKPNTFIIRCLQWTTVIERTFHVDTPEEREEWTEAIQAVADRLQRQEEERMNCSPTSQIDNIGEEEMDASTTHHKRKTMNDFDYLKLLGKGTFGKVILVREKASGKYYAMKILKKEVIIAKDEVAHTLTESRVLKNTRHPFLTSLKYSFQTKDRLCFVMEYVNGGELFFHLSRERVFSEDRTRFYGAEIVSALDYLHSGKIVYRDLKLENLMLDKDGHIKITDFGLCKEGITDAATMKTFCGTPEYLAPEVLEDNDYGRAVDWWGLGVVMYEMMCGRLPFYNQDHEKLFELILMEDIKFPRTLSSDAKSLLSGLLIKDPNKRLGGGPDDPKEIMRHSFFSGVNWQDVYDKKLVPPFKPQVTSETDTRYFDEEFTAQTITITPPEKDDDDGMDCMDNERRPHFPQFSYSASGRE</sequence>
<proteinExistence type="evidence at transcript level"/>
<comment type="function">
    <text evidence="1">AKT3 is one of 3 closely related serine/threonine-protein kinases (AKT1, AKT2 and AKT3) called the AKT kinase, and which regulate many processes including metabolism, proliferation, cell survival, growth and angiogenesis. This is mediated through serine and/or threonine phosphorylation of a range of downstream substrates. Over 100 substrate candidates have been reported so far, but for most of them, no isoform specificity has been reported. AKT3 is the least studied AKT isoform. It plays an important role in brain development and is crucial for the viability of malignant glioma cells. AKT3 isoform may also be the key molecule in up-regulation and down-regulation of MMP13 via IL13. Required for the coordination of mitochondrial biogenesis with growth factor-induced increases in cellular energy demands. Down-regulation by RNA interference reduces the expression of the phosphorylated form of BAD, resulting in the induction of caspase-dependent apoptosis (By similarity).</text>
</comment>
<comment type="catalytic activity">
    <reaction>
        <text>L-seryl-[protein] + ATP = O-phospho-L-seryl-[protein] + ADP + H(+)</text>
        <dbReference type="Rhea" id="RHEA:17989"/>
        <dbReference type="Rhea" id="RHEA-COMP:9863"/>
        <dbReference type="Rhea" id="RHEA-COMP:11604"/>
        <dbReference type="ChEBI" id="CHEBI:15378"/>
        <dbReference type="ChEBI" id="CHEBI:29999"/>
        <dbReference type="ChEBI" id="CHEBI:30616"/>
        <dbReference type="ChEBI" id="CHEBI:83421"/>
        <dbReference type="ChEBI" id="CHEBI:456216"/>
        <dbReference type="EC" id="2.7.11.1"/>
    </reaction>
</comment>
<comment type="catalytic activity">
    <reaction>
        <text>L-threonyl-[protein] + ATP = O-phospho-L-threonyl-[protein] + ADP + H(+)</text>
        <dbReference type="Rhea" id="RHEA:46608"/>
        <dbReference type="Rhea" id="RHEA-COMP:11060"/>
        <dbReference type="Rhea" id="RHEA-COMP:11605"/>
        <dbReference type="ChEBI" id="CHEBI:15378"/>
        <dbReference type="ChEBI" id="CHEBI:30013"/>
        <dbReference type="ChEBI" id="CHEBI:30616"/>
        <dbReference type="ChEBI" id="CHEBI:61977"/>
        <dbReference type="ChEBI" id="CHEBI:456216"/>
        <dbReference type="EC" id="2.7.11.1"/>
    </reaction>
</comment>
<comment type="activity regulation">
    <text evidence="1">Two specific sites, one in the kinase domain (Thr-305) and the other in the C-terminal regulatory region (Ser-472), need to be phosphorylated for its full activation. IGF-1 leads to the activation of AKT3, which may play a role in regulating cell survival.</text>
</comment>
<comment type="subunit">
    <text evidence="6">Interacts (via PH domain) with TCL1A; this enhances AKT3 phosphorylation and activation. Interacts with TRAF6 (By similarity). Interacts with KCTD20 (By similarity). Interacts with BTBD10 (By similarity).</text>
</comment>
<comment type="subcellular location">
    <subcellularLocation>
        <location evidence="1">Nucleus</location>
    </subcellularLocation>
    <subcellularLocation>
        <location evidence="1">Cytoplasm</location>
    </subcellularLocation>
    <subcellularLocation>
        <location evidence="1">Membrane</location>
        <topology evidence="1">Peripheral membrane protein</topology>
    </subcellularLocation>
    <text evidence="1">Membrane-associated after cell stimulation leading to its translocation.</text>
</comment>
<comment type="domain">
    <text>Binding of the PH domain to the phosphatidylinositol 3-kinase alpha (PI(3)K) results in its targeting to the plasma membrane.</text>
</comment>
<comment type="PTM">
    <text evidence="5 7">Phosphorylation on Thr-305 and Ser-472 is required for full activity. Phosphorylation of the activation loop at Thr-305 by PDPK1/PDK1 is a prerequisite for full activation (By similarity). Phosphorylation at Ser-472 by mTORC2 in response to growth factors plays a key role in AKT1 activation by facilitating subsequent phosphorylation of the activation loop by PDPK1/PDK1 (By similarity).</text>
</comment>
<comment type="PTM">
    <text evidence="1">Ubiquitinated. When fully phosphorylated and translocated into the nucleus, undergoes 'Lys-48'-polyubiquitination catalyzed by TTC3, leading to its degradation by the proteasome (By similarity).</text>
</comment>
<comment type="PTM">
    <text evidence="2">O-GlcNAcylation at Thr-302 and Thr-309 inhibits activating phosphorylation at Thr-305 via disrupting the interaction between AKT and PDPK1/PDK1.</text>
</comment>
<comment type="similarity">
    <text evidence="13">Belongs to the protein kinase superfamily. AGC Ser/Thr protein kinase family. RAC subfamily.</text>
</comment>
<comment type="caution">
    <text evidence="13">In light of strong homologies in the primary amino acid sequence, the 3 AKT kinases were long surmised to play redundant and overlapping roles. More recent studies has brought into question the redundancy within AKT kinase isoforms and instead pointed to isoform specific functions in different cellular events and diseases. AKT1 is more specifically involved in cellular survival pathways, by inhibiting apoptotic processes; whereas AKT2 is more specific for the insulin receptor signaling pathway. Moreover, while AKT1 and AKT2 are often implicated in many aspects of cellular transformation, the 2 isoforms act in a complementary opposing manner. The role of AKT3 is less clear, though it appears to be predominantly expressed in brain.</text>
</comment>
<accession>Q63484</accession>
<evidence type="ECO:0000250" key="1"/>
<evidence type="ECO:0000250" key="2">
    <source>
        <dbReference type="UniProtKB" id="P31749"/>
    </source>
</evidence>
<evidence type="ECO:0000250" key="3">
    <source>
        <dbReference type="UniProtKB" id="P31750"/>
    </source>
</evidence>
<evidence type="ECO:0000250" key="4">
    <source>
        <dbReference type="UniProtKB" id="P31751"/>
    </source>
</evidence>
<evidence type="ECO:0000250" key="5">
    <source>
        <dbReference type="UniProtKB" id="Q60823"/>
    </source>
</evidence>
<evidence type="ECO:0000250" key="6">
    <source>
        <dbReference type="UniProtKB" id="Q9WUA6"/>
    </source>
</evidence>
<evidence type="ECO:0000250" key="7">
    <source>
        <dbReference type="UniProtKB" id="Q9Y243"/>
    </source>
</evidence>
<evidence type="ECO:0000255" key="8">
    <source>
        <dbReference type="PROSITE-ProRule" id="PRU00145"/>
    </source>
</evidence>
<evidence type="ECO:0000255" key="9">
    <source>
        <dbReference type="PROSITE-ProRule" id="PRU00159"/>
    </source>
</evidence>
<evidence type="ECO:0000255" key="10">
    <source>
        <dbReference type="PROSITE-ProRule" id="PRU00618"/>
    </source>
</evidence>
<evidence type="ECO:0000255" key="11">
    <source>
        <dbReference type="PROSITE-ProRule" id="PRU10027"/>
    </source>
</evidence>
<evidence type="ECO:0000256" key="12">
    <source>
        <dbReference type="SAM" id="MobiDB-lite"/>
    </source>
</evidence>
<evidence type="ECO:0000305" key="13"/>
<name>AKT3_RAT</name>
<organism>
    <name type="scientific">Rattus norvegicus</name>
    <name type="common">Rat</name>
    <dbReference type="NCBI Taxonomy" id="10116"/>
    <lineage>
        <taxon>Eukaryota</taxon>
        <taxon>Metazoa</taxon>
        <taxon>Chordata</taxon>
        <taxon>Craniata</taxon>
        <taxon>Vertebrata</taxon>
        <taxon>Euteleostomi</taxon>
        <taxon>Mammalia</taxon>
        <taxon>Eutheria</taxon>
        <taxon>Euarchontoglires</taxon>
        <taxon>Glires</taxon>
        <taxon>Rodentia</taxon>
        <taxon>Myomorpha</taxon>
        <taxon>Muroidea</taxon>
        <taxon>Muridae</taxon>
        <taxon>Murinae</taxon>
        <taxon>Rattus</taxon>
    </lineage>
</organism>
<keyword id="KW-0007">Acetylation</keyword>
<keyword id="KW-0067">ATP-binding</keyword>
<keyword id="KW-0963">Cytoplasm</keyword>
<keyword id="KW-1015">Disulfide bond</keyword>
<keyword id="KW-0325">Glycoprotein</keyword>
<keyword id="KW-0418">Kinase</keyword>
<keyword id="KW-0472">Membrane</keyword>
<keyword id="KW-0547">Nucleotide-binding</keyword>
<keyword id="KW-0539">Nucleus</keyword>
<keyword id="KW-0597">Phosphoprotein</keyword>
<keyword id="KW-1185">Reference proteome</keyword>
<keyword id="KW-0723">Serine/threonine-protein kinase</keyword>
<keyword id="KW-0808">Transferase</keyword>
<keyword id="KW-0832">Ubl conjugation</keyword>
<protein>
    <recommendedName>
        <fullName>RAC-gamma serine/threonine-protein kinase</fullName>
        <ecNumber>2.7.11.1</ecNumber>
    </recommendedName>
    <alternativeName>
        <fullName>Protein kinase Akt-3</fullName>
    </alternativeName>
    <alternativeName>
        <fullName>Protein kinase B gamma</fullName>
        <shortName>PKB gamma</shortName>
    </alternativeName>
    <alternativeName>
        <fullName>RAC-PK-gamma</fullName>
    </alternativeName>
</protein>